<protein>
    <recommendedName>
        <fullName evidence="1">ATP synthase epsilon chain</fullName>
    </recommendedName>
    <alternativeName>
        <fullName evidence="1">ATP synthase F1 sector epsilon subunit</fullName>
    </alternativeName>
    <alternativeName>
        <fullName evidence="1">F-ATPase epsilon subunit</fullName>
    </alternativeName>
</protein>
<proteinExistence type="inferred from homology"/>
<accession>Q2A1I3</accession>
<reference key="1">
    <citation type="submission" date="2006-03" db="EMBL/GenBank/DDBJ databases">
        <title>Complete genome sequence of Francisella tularensis LVS (Live Vaccine Strain).</title>
        <authorList>
            <person name="Chain P."/>
            <person name="Larimer F."/>
            <person name="Land M."/>
            <person name="Stilwagen S."/>
            <person name="Larsson P."/>
            <person name="Bearden S."/>
            <person name="Chu M."/>
            <person name="Oyston P."/>
            <person name="Forsman M."/>
            <person name="Andersson S."/>
            <person name="Lindler L."/>
            <person name="Titball R."/>
            <person name="Garcia E."/>
        </authorList>
    </citation>
    <scope>NUCLEOTIDE SEQUENCE [LARGE SCALE GENOMIC DNA]</scope>
    <source>
        <strain>LVS</strain>
    </source>
</reference>
<evidence type="ECO:0000255" key="1">
    <source>
        <dbReference type="HAMAP-Rule" id="MF_00530"/>
    </source>
</evidence>
<dbReference type="EMBL" id="AM233362">
    <property type="protein sequence ID" value="CAJ80233.1"/>
    <property type="molecule type" value="Genomic_DNA"/>
</dbReference>
<dbReference type="RefSeq" id="WP_003017331.1">
    <property type="nucleotide sequence ID" value="NZ_CP009694.1"/>
</dbReference>
<dbReference type="SMR" id="Q2A1I3"/>
<dbReference type="KEGG" id="ftl:FTL_1794"/>
<dbReference type="Proteomes" id="UP000001944">
    <property type="component" value="Chromosome"/>
</dbReference>
<dbReference type="GO" id="GO:0005886">
    <property type="term" value="C:plasma membrane"/>
    <property type="evidence" value="ECO:0007669"/>
    <property type="project" value="UniProtKB-SubCell"/>
</dbReference>
<dbReference type="GO" id="GO:0045259">
    <property type="term" value="C:proton-transporting ATP synthase complex"/>
    <property type="evidence" value="ECO:0007669"/>
    <property type="project" value="UniProtKB-KW"/>
</dbReference>
<dbReference type="GO" id="GO:0005524">
    <property type="term" value="F:ATP binding"/>
    <property type="evidence" value="ECO:0007669"/>
    <property type="project" value="UniProtKB-UniRule"/>
</dbReference>
<dbReference type="GO" id="GO:0046933">
    <property type="term" value="F:proton-transporting ATP synthase activity, rotational mechanism"/>
    <property type="evidence" value="ECO:0007669"/>
    <property type="project" value="UniProtKB-UniRule"/>
</dbReference>
<dbReference type="CDD" id="cd12152">
    <property type="entry name" value="F1-ATPase_delta"/>
    <property type="match status" value="1"/>
</dbReference>
<dbReference type="Gene3D" id="2.60.15.10">
    <property type="entry name" value="F0F1 ATP synthase delta/epsilon subunit, N-terminal"/>
    <property type="match status" value="1"/>
</dbReference>
<dbReference type="HAMAP" id="MF_00530">
    <property type="entry name" value="ATP_synth_epsil_bac"/>
    <property type="match status" value="1"/>
</dbReference>
<dbReference type="InterPro" id="IPR001469">
    <property type="entry name" value="ATP_synth_F1_dsu/esu"/>
</dbReference>
<dbReference type="InterPro" id="IPR020546">
    <property type="entry name" value="ATP_synth_F1_dsu/esu_N"/>
</dbReference>
<dbReference type="InterPro" id="IPR036771">
    <property type="entry name" value="ATPsynth_dsu/esu_N"/>
</dbReference>
<dbReference type="NCBIfam" id="TIGR01216">
    <property type="entry name" value="ATP_synt_epsi"/>
    <property type="match status" value="1"/>
</dbReference>
<dbReference type="NCBIfam" id="NF009986">
    <property type="entry name" value="PRK13452.1"/>
    <property type="match status" value="1"/>
</dbReference>
<dbReference type="PANTHER" id="PTHR13822">
    <property type="entry name" value="ATP SYNTHASE DELTA/EPSILON CHAIN"/>
    <property type="match status" value="1"/>
</dbReference>
<dbReference type="PANTHER" id="PTHR13822:SF10">
    <property type="entry name" value="ATP SYNTHASE EPSILON CHAIN, CHLOROPLASTIC"/>
    <property type="match status" value="1"/>
</dbReference>
<dbReference type="Pfam" id="PF02823">
    <property type="entry name" value="ATP-synt_DE_N"/>
    <property type="match status" value="1"/>
</dbReference>
<dbReference type="SUPFAM" id="SSF51344">
    <property type="entry name" value="Epsilon subunit of F1F0-ATP synthase N-terminal domain"/>
    <property type="match status" value="1"/>
</dbReference>
<comment type="function">
    <text evidence="1">Produces ATP from ADP in the presence of a proton gradient across the membrane.</text>
</comment>
<comment type="subunit">
    <text>F-type ATPases have 2 components, CF(1) - the catalytic core - and CF(0) - the membrane proton channel. CF(1) has five subunits: alpha(3), beta(3), gamma(1), delta(1), epsilon(1). CF(0) has three main subunits: a, b and c.</text>
</comment>
<comment type="subcellular location">
    <subcellularLocation>
        <location evidence="1">Cell inner membrane</location>
        <topology evidence="1">Peripheral membrane protein</topology>
    </subcellularLocation>
</comment>
<comment type="similarity">
    <text evidence="1">Belongs to the ATPase epsilon chain family.</text>
</comment>
<sequence length="145" mass="15737">MTKKYLKVDVVSPLGSVFKGEADMVSLRGSAGEMGIVYGHTELLSTLPAGVVNVRKGQHTDVLYVSGGIVEVTPTRVTIMVDDMERAENLNQAEAEKARARAKEVLKNPDASKLDIEAANKRLKEADARLKALNSSNGLYYSKDD</sequence>
<feature type="chain" id="PRO_0000265812" description="ATP synthase epsilon chain">
    <location>
        <begin position="1"/>
        <end position="145"/>
    </location>
</feature>
<gene>
    <name evidence="1" type="primary">atpC</name>
    <name type="ordered locus">FTL_1794</name>
</gene>
<organism>
    <name type="scientific">Francisella tularensis subsp. holarctica (strain LVS)</name>
    <dbReference type="NCBI Taxonomy" id="376619"/>
    <lineage>
        <taxon>Bacteria</taxon>
        <taxon>Pseudomonadati</taxon>
        <taxon>Pseudomonadota</taxon>
        <taxon>Gammaproteobacteria</taxon>
        <taxon>Thiotrichales</taxon>
        <taxon>Francisellaceae</taxon>
        <taxon>Francisella</taxon>
    </lineage>
</organism>
<name>ATPE_FRATH</name>
<keyword id="KW-0066">ATP synthesis</keyword>
<keyword id="KW-0997">Cell inner membrane</keyword>
<keyword id="KW-1003">Cell membrane</keyword>
<keyword id="KW-0139">CF(1)</keyword>
<keyword id="KW-0375">Hydrogen ion transport</keyword>
<keyword id="KW-0406">Ion transport</keyword>
<keyword id="KW-0472">Membrane</keyword>
<keyword id="KW-1185">Reference proteome</keyword>
<keyword id="KW-0813">Transport</keyword>